<proteinExistence type="inferred from homology"/>
<sequence length="132" mass="14882">MVMTDPIADMLTRIRNANMVRHEKLEVPASKIKKEIAELLKREGFIRDVEYIEDNKQGILRIFLKYGANNERVITGLKRISKPGLRVYAKADEVPRVLNGLGIALVSTSKGVMTDKDARQLQTGGEVVAYVW</sequence>
<feature type="chain" id="PRO_1000165304" description="Small ribosomal subunit protein uS8">
    <location>
        <begin position="1"/>
        <end position="132"/>
    </location>
</feature>
<reference key="1">
    <citation type="submission" date="2009-04" db="EMBL/GenBank/DDBJ databases">
        <title>Genome sequence of Bacillus anthracis A0248.</title>
        <authorList>
            <person name="Dodson R.J."/>
            <person name="Munk A.C."/>
            <person name="Bruce D."/>
            <person name="Detter C."/>
            <person name="Tapia R."/>
            <person name="Sutton G."/>
            <person name="Sims D."/>
            <person name="Brettin T."/>
        </authorList>
    </citation>
    <scope>NUCLEOTIDE SEQUENCE [LARGE SCALE GENOMIC DNA]</scope>
    <source>
        <strain>A0248</strain>
    </source>
</reference>
<comment type="function">
    <text evidence="1">One of the primary rRNA binding proteins, it binds directly to 16S rRNA central domain where it helps coordinate assembly of the platform of the 30S subunit.</text>
</comment>
<comment type="subunit">
    <text evidence="1">Part of the 30S ribosomal subunit. Contacts proteins S5 and S12.</text>
</comment>
<comment type="similarity">
    <text evidence="1">Belongs to the universal ribosomal protein uS8 family.</text>
</comment>
<accession>C3P9R9</accession>
<organism>
    <name type="scientific">Bacillus anthracis (strain A0248)</name>
    <dbReference type="NCBI Taxonomy" id="592021"/>
    <lineage>
        <taxon>Bacteria</taxon>
        <taxon>Bacillati</taxon>
        <taxon>Bacillota</taxon>
        <taxon>Bacilli</taxon>
        <taxon>Bacillales</taxon>
        <taxon>Bacillaceae</taxon>
        <taxon>Bacillus</taxon>
        <taxon>Bacillus cereus group</taxon>
    </lineage>
</organism>
<dbReference type="EMBL" id="CP001598">
    <property type="protein sequence ID" value="ACQ48855.1"/>
    <property type="molecule type" value="Genomic_DNA"/>
</dbReference>
<dbReference type="RefSeq" id="WP_000245511.1">
    <property type="nucleotide sequence ID" value="NC_012659.1"/>
</dbReference>
<dbReference type="SMR" id="C3P9R9"/>
<dbReference type="GeneID" id="93010929"/>
<dbReference type="KEGG" id="bai:BAA_0140"/>
<dbReference type="HOGENOM" id="CLU_098428_0_2_9"/>
<dbReference type="GO" id="GO:1990904">
    <property type="term" value="C:ribonucleoprotein complex"/>
    <property type="evidence" value="ECO:0007669"/>
    <property type="project" value="UniProtKB-KW"/>
</dbReference>
<dbReference type="GO" id="GO:0005840">
    <property type="term" value="C:ribosome"/>
    <property type="evidence" value="ECO:0007669"/>
    <property type="project" value="UniProtKB-KW"/>
</dbReference>
<dbReference type="GO" id="GO:0019843">
    <property type="term" value="F:rRNA binding"/>
    <property type="evidence" value="ECO:0007669"/>
    <property type="project" value="UniProtKB-UniRule"/>
</dbReference>
<dbReference type="GO" id="GO:0003735">
    <property type="term" value="F:structural constituent of ribosome"/>
    <property type="evidence" value="ECO:0007669"/>
    <property type="project" value="InterPro"/>
</dbReference>
<dbReference type="GO" id="GO:0006412">
    <property type="term" value="P:translation"/>
    <property type="evidence" value="ECO:0007669"/>
    <property type="project" value="UniProtKB-UniRule"/>
</dbReference>
<dbReference type="FunFam" id="3.30.1370.30:FF:000002">
    <property type="entry name" value="30S ribosomal protein S8"/>
    <property type="match status" value="1"/>
</dbReference>
<dbReference type="FunFam" id="3.30.1490.10:FF:000001">
    <property type="entry name" value="30S ribosomal protein S8"/>
    <property type="match status" value="1"/>
</dbReference>
<dbReference type="Gene3D" id="3.30.1370.30">
    <property type="match status" value="1"/>
</dbReference>
<dbReference type="Gene3D" id="3.30.1490.10">
    <property type="match status" value="1"/>
</dbReference>
<dbReference type="HAMAP" id="MF_01302_B">
    <property type="entry name" value="Ribosomal_uS8_B"/>
    <property type="match status" value="1"/>
</dbReference>
<dbReference type="InterPro" id="IPR000630">
    <property type="entry name" value="Ribosomal_uS8"/>
</dbReference>
<dbReference type="InterPro" id="IPR047863">
    <property type="entry name" value="Ribosomal_uS8_CS"/>
</dbReference>
<dbReference type="InterPro" id="IPR035987">
    <property type="entry name" value="Ribosomal_uS8_sf"/>
</dbReference>
<dbReference type="NCBIfam" id="NF001109">
    <property type="entry name" value="PRK00136.1"/>
    <property type="match status" value="1"/>
</dbReference>
<dbReference type="PANTHER" id="PTHR11758">
    <property type="entry name" value="40S RIBOSOMAL PROTEIN S15A"/>
    <property type="match status" value="1"/>
</dbReference>
<dbReference type="Pfam" id="PF00410">
    <property type="entry name" value="Ribosomal_S8"/>
    <property type="match status" value="1"/>
</dbReference>
<dbReference type="SUPFAM" id="SSF56047">
    <property type="entry name" value="Ribosomal protein S8"/>
    <property type="match status" value="1"/>
</dbReference>
<dbReference type="PROSITE" id="PS00053">
    <property type="entry name" value="RIBOSOMAL_S8"/>
    <property type="match status" value="1"/>
</dbReference>
<protein>
    <recommendedName>
        <fullName evidence="1">Small ribosomal subunit protein uS8</fullName>
    </recommendedName>
    <alternativeName>
        <fullName evidence="2">30S ribosomal protein S8</fullName>
    </alternativeName>
</protein>
<gene>
    <name evidence="1" type="primary">rpsH</name>
    <name type="ordered locus">BAA_0140</name>
</gene>
<name>RS8_BACAA</name>
<evidence type="ECO:0000255" key="1">
    <source>
        <dbReference type="HAMAP-Rule" id="MF_01302"/>
    </source>
</evidence>
<evidence type="ECO:0000305" key="2"/>
<keyword id="KW-0687">Ribonucleoprotein</keyword>
<keyword id="KW-0689">Ribosomal protein</keyword>
<keyword id="KW-0694">RNA-binding</keyword>
<keyword id="KW-0699">rRNA-binding</keyword>